<sequence length="80" mass="8687">MENGASSEGRDPSAFLGEIIGAPVTVKLNSGVVYRGELQSVDGYMNIALERSEEFVDGKLRRSYGDAFIRGNNVLYISAQ</sequence>
<gene>
    <name type="primary">lsm6</name>
    <name type="ORF">NFIA_051930</name>
</gene>
<protein>
    <recommendedName>
        <fullName>U6 snRNA-associated Sm-like protein LSm6</fullName>
    </recommendedName>
</protein>
<feature type="chain" id="PRO_0000333601" description="U6 snRNA-associated Sm-like protein LSm6">
    <location>
        <begin position="1"/>
        <end position="80"/>
    </location>
</feature>
<feature type="domain" description="Sm" evidence="2">
    <location>
        <begin position="11"/>
        <end position="80"/>
    </location>
</feature>
<comment type="function">
    <text evidence="1">Component of LSm protein complexes, which are involved in RNA processing and may function in a chaperone-like manner, facilitating the efficient association of RNA processing factors with their substrates. Component of the cytoplasmic LSM1-LSM7 complex, which is thought to be involved in mRNA degradation by activating the decapping step in the 5'-to-3' mRNA decay pathway. Component of the nuclear LSM2-LSM8 complex, which is involved in splicing of nuclear mRNAs. LSM2-LSM8 associates with multiple snRNP complexes containing the U6 snRNA (U4/U6 di-snRNP, spliceosomal U4/U6.U5 tri-snRNP, and free U6 snRNP). It binds directly to the 3'-terminal U-tract of U6 snRNA and plays a role in the biogenesis and stability of the U6 snRNP and U4/U6 snRNP complexes. LSM2-LSM8 probably also is involved degradation of nuclear pre-mRNA by targeting them for decapping, and in processing of pre-tRNAs, pre-rRNAs and U3 snoRNA (By similarity).</text>
</comment>
<comment type="subunit">
    <text evidence="1">Component of the heptameric LSM1-LSM7 complex, which consists of lsm1, lsm2, lsm3, lsm4, lsm5, lsm6 and lsm7. Component of the heptameric LSM2-LSM8 complex, which consists of lsm2, lsm3, lsm4, lsm5, lsm6, lsm7 and lsm8. The LSm subunits form a seven-membered ring structure with a doughnut shape (By similarity).</text>
</comment>
<comment type="subcellular location">
    <subcellularLocation>
        <location evidence="1">Cytoplasm</location>
    </subcellularLocation>
    <subcellularLocation>
        <location evidence="1">Nucleus</location>
    </subcellularLocation>
</comment>
<comment type="similarity">
    <text evidence="3">Belongs to the snRNP Sm proteins family. SmF/LSm6 subfamily.</text>
</comment>
<comment type="sequence caution" evidence="3">
    <conflict type="erroneous gene model prediction">
        <sequence resource="EMBL-CDS" id="EAW15848"/>
    </conflict>
</comment>
<proteinExistence type="inferred from homology"/>
<reference key="1">
    <citation type="journal article" date="2008" name="PLoS Genet.">
        <title>Genomic islands in the pathogenic filamentous fungus Aspergillus fumigatus.</title>
        <authorList>
            <person name="Fedorova N.D."/>
            <person name="Khaldi N."/>
            <person name="Joardar V.S."/>
            <person name="Maiti R."/>
            <person name="Amedeo P."/>
            <person name="Anderson M.J."/>
            <person name="Crabtree J."/>
            <person name="Silva J.C."/>
            <person name="Badger J.H."/>
            <person name="Albarraq A."/>
            <person name="Angiuoli S."/>
            <person name="Bussey H."/>
            <person name="Bowyer P."/>
            <person name="Cotty P.J."/>
            <person name="Dyer P.S."/>
            <person name="Egan A."/>
            <person name="Galens K."/>
            <person name="Fraser-Liggett C.M."/>
            <person name="Haas B.J."/>
            <person name="Inman J.M."/>
            <person name="Kent R."/>
            <person name="Lemieux S."/>
            <person name="Malavazi I."/>
            <person name="Orvis J."/>
            <person name="Roemer T."/>
            <person name="Ronning C.M."/>
            <person name="Sundaram J.P."/>
            <person name="Sutton G."/>
            <person name="Turner G."/>
            <person name="Venter J.C."/>
            <person name="White O.R."/>
            <person name="Whitty B.R."/>
            <person name="Youngman P."/>
            <person name="Wolfe K.H."/>
            <person name="Goldman G.H."/>
            <person name="Wortman J.R."/>
            <person name="Jiang B."/>
            <person name="Denning D.W."/>
            <person name="Nierman W.C."/>
        </authorList>
    </citation>
    <scope>NUCLEOTIDE SEQUENCE [LARGE SCALE GENOMIC DNA]</scope>
    <source>
        <strain>ATCC 1020 / DSM 3700 / CBS 544.65 / FGSC A1164 / JCM 1740 / NRRL 181 / WB 181</strain>
    </source>
</reference>
<evidence type="ECO:0000250" key="1"/>
<evidence type="ECO:0000255" key="2">
    <source>
        <dbReference type="PROSITE-ProRule" id="PRU01346"/>
    </source>
</evidence>
<evidence type="ECO:0000305" key="3"/>
<organism>
    <name type="scientific">Neosartorya fischeri (strain ATCC 1020 / DSM 3700 / CBS 544.65 / FGSC A1164 / JCM 1740 / NRRL 181 / WB 181)</name>
    <name type="common">Aspergillus fischerianus</name>
    <dbReference type="NCBI Taxonomy" id="331117"/>
    <lineage>
        <taxon>Eukaryota</taxon>
        <taxon>Fungi</taxon>
        <taxon>Dikarya</taxon>
        <taxon>Ascomycota</taxon>
        <taxon>Pezizomycotina</taxon>
        <taxon>Eurotiomycetes</taxon>
        <taxon>Eurotiomycetidae</taxon>
        <taxon>Eurotiales</taxon>
        <taxon>Aspergillaceae</taxon>
        <taxon>Aspergillus</taxon>
        <taxon>Aspergillus subgen. Fumigati</taxon>
    </lineage>
</organism>
<accession>A1DM27</accession>
<name>LSM6_NEOFI</name>
<dbReference type="EMBL" id="DS027698">
    <property type="protein sequence ID" value="EAW15848.1"/>
    <property type="status" value="ALT_SEQ"/>
    <property type="molecule type" value="Genomic_DNA"/>
</dbReference>
<dbReference type="RefSeq" id="XP_001257745.1">
    <property type="nucleotide sequence ID" value="XM_001257744.1"/>
</dbReference>
<dbReference type="SMR" id="A1DM27"/>
<dbReference type="STRING" id="331117.A1DM27"/>
<dbReference type="GeneID" id="4584260"/>
<dbReference type="KEGG" id="nfi:NFIA_051930"/>
<dbReference type="VEuPathDB" id="FungiDB:NFIA_051930"/>
<dbReference type="OrthoDB" id="268799at2759"/>
<dbReference type="Proteomes" id="UP000006702">
    <property type="component" value="Unassembled WGS sequence"/>
</dbReference>
<dbReference type="GO" id="GO:1990726">
    <property type="term" value="C:Lsm1-7-Pat1 complex"/>
    <property type="evidence" value="ECO:0007669"/>
    <property type="project" value="EnsemblFungi"/>
</dbReference>
<dbReference type="GO" id="GO:0005730">
    <property type="term" value="C:nucleolus"/>
    <property type="evidence" value="ECO:0007669"/>
    <property type="project" value="EnsemblFungi"/>
</dbReference>
<dbReference type="GO" id="GO:0000932">
    <property type="term" value="C:P-body"/>
    <property type="evidence" value="ECO:0007669"/>
    <property type="project" value="EnsemblFungi"/>
</dbReference>
<dbReference type="GO" id="GO:0005732">
    <property type="term" value="C:sno(s)RNA-containing ribonucleoprotein complex"/>
    <property type="evidence" value="ECO:0007669"/>
    <property type="project" value="EnsemblFungi"/>
</dbReference>
<dbReference type="GO" id="GO:0005681">
    <property type="term" value="C:spliceosomal complex"/>
    <property type="evidence" value="ECO:0007669"/>
    <property type="project" value="UniProtKB-KW"/>
</dbReference>
<dbReference type="GO" id="GO:0046540">
    <property type="term" value="C:U4/U6 x U5 tri-snRNP complex"/>
    <property type="evidence" value="ECO:0007669"/>
    <property type="project" value="EnsemblFungi"/>
</dbReference>
<dbReference type="GO" id="GO:0005688">
    <property type="term" value="C:U6 snRNP"/>
    <property type="evidence" value="ECO:0007669"/>
    <property type="project" value="EnsemblFungi"/>
</dbReference>
<dbReference type="GO" id="GO:0003723">
    <property type="term" value="F:RNA binding"/>
    <property type="evidence" value="ECO:0007669"/>
    <property type="project" value="UniProtKB-KW"/>
</dbReference>
<dbReference type="GO" id="GO:0000290">
    <property type="term" value="P:deadenylation-dependent decapping of nuclear-transcribed mRNA"/>
    <property type="evidence" value="ECO:0007669"/>
    <property type="project" value="EnsemblFungi"/>
</dbReference>
<dbReference type="GO" id="GO:0030490">
    <property type="term" value="P:maturation of SSU-rRNA"/>
    <property type="evidence" value="ECO:0007669"/>
    <property type="project" value="EnsemblFungi"/>
</dbReference>
<dbReference type="GO" id="GO:0000398">
    <property type="term" value="P:mRNA splicing, via spliceosome"/>
    <property type="evidence" value="ECO:0007669"/>
    <property type="project" value="EnsemblFungi"/>
</dbReference>
<dbReference type="GO" id="GO:0008033">
    <property type="term" value="P:tRNA processing"/>
    <property type="evidence" value="ECO:0007669"/>
    <property type="project" value="UniProtKB-KW"/>
</dbReference>
<dbReference type="CDD" id="cd01726">
    <property type="entry name" value="LSm6"/>
    <property type="match status" value="1"/>
</dbReference>
<dbReference type="FunFam" id="2.30.30.100:FF:000037">
    <property type="entry name" value="U6 snRNA-associated Sm-like protein LSm6"/>
    <property type="match status" value="1"/>
</dbReference>
<dbReference type="Gene3D" id="2.30.30.100">
    <property type="match status" value="1"/>
</dbReference>
<dbReference type="InterPro" id="IPR016487">
    <property type="entry name" value="Lsm6/sSmF"/>
</dbReference>
<dbReference type="InterPro" id="IPR010920">
    <property type="entry name" value="LSM_dom_sf"/>
</dbReference>
<dbReference type="InterPro" id="IPR047575">
    <property type="entry name" value="Sm"/>
</dbReference>
<dbReference type="InterPro" id="IPR001163">
    <property type="entry name" value="Sm_dom_euk/arc"/>
</dbReference>
<dbReference type="PANTHER" id="PTHR11021">
    <property type="entry name" value="SMALL NUCLEAR RIBONUCLEOPROTEIN F SNRNP-F"/>
    <property type="match status" value="1"/>
</dbReference>
<dbReference type="PANTHER" id="PTHR11021:SF1">
    <property type="entry name" value="U6 SNRNA-ASSOCIATED SM-LIKE PROTEIN LSM6"/>
    <property type="match status" value="1"/>
</dbReference>
<dbReference type="Pfam" id="PF01423">
    <property type="entry name" value="LSM"/>
    <property type="match status" value="1"/>
</dbReference>
<dbReference type="PIRSF" id="PIRSF006609">
    <property type="entry name" value="snRNP_SmF"/>
    <property type="match status" value="1"/>
</dbReference>
<dbReference type="SMART" id="SM00651">
    <property type="entry name" value="Sm"/>
    <property type="match status" value="1"/>
</dbReference>
<dbReference type="SUPFAM" id="SSF50182">
    <property type="entry name" value="Sm-like ribonucleoproteins"/>
    <property type="match status" value="1"/>
</dbReference>
<dbReference type="PROSITE" id="PS52002">
    <property type="entry name" value="SM"/>
    <property type="match status" value="1"/>
</dbReference>
<keyword id="KW-0963">Cytoplasm</keyword>
<keyword id="KW-0507">mRNA processing</keyword>
<keyword id="KW-0508">mRNA splicing</keyword>
<keyword id="KW-0539">Nucleus</keyword>
<keyword id="KW-1185">Reference proteome</keyword>
<keyword id="KW-0687">Ribonucleoprotein</keyword>
<keyword id="KW-0694">RNA-binding</keyword>
<keyword id="KW-0698">rRNA processing</keyword>
<keyword id="KW-0747">Spliceosome</keyword>
<keyword id="KW-0819">tRNA processing</keyword>